<protein>
    <recommendedName>
        <fullName evidence="2">Small ribosomal subunit protein uS7cz/uS7cy</fullName>
    </recommendedName>
    <alternativeName>
        <fullName>30S ribosomal protein S7, chloroplastic</fullName>
    </alternativeName>
</protein>
<reference key="1">
    <citation type="journal article" date="2000" name="Mol. Gen. Genet.">
        <title>Complete nucleotide sequence of the Oenothera elata plastid chromosome, representing plastome I of the five distinguishable Euoenothera plastomes.</title>
        <authorList>
            <person name="Hupfer H."/>
            <person name="Swiatek M."/>
            <person name="Hornung S."/>
            <person name="Herrmann R.G."/>
            <person name="Maier R.M."/>
            <person name="Chiu W.-L."/>
            <person name="Sears B."/>
        </authorList>
    </citation>
    <scope>NUCLEOTIDE SEQUENCE [LARGE SCALE GENOMIC DNA]</scope>
    <source>
        <strain>cv. Johansen</strain>
    </source>
</reference>
<reference key="2">
    <citation type="journal article" date="2008" name="Nucleic Acids Res.">
        <title>The complete nucleotide sequences of the five genetically distinct plastid genomes of Oenothera, subsection Oenothera: I. Sequence evaluation and plastome evolution.</title>
        <authorList>
            <person name="Greiner S."/>
            <person name="Wang X."/>
            <person name="Rauwolf U."/>
            <person name="Silber M.V."/>
            <person name="Mayer K."/>
            <person name="Meurer J."/>
            <person name="Haberer G."/>
            <person name="Herrmann R.G."/>
        </authorList>
    </citation>
    <scope>SEQUENCE REVISION TO 72-74; 80 AND 135-141</scope>
</reference>
<name>RR7_OENEH</name>
<geneLocation type="chloroplast"/>
<sequence length="155" mass="17556">MSRRGTAEEKTAKSDPIYRNRLVNMLINRILKHGKKSLAYQILYRAMKKIQQKTETNPLSVLRQAIRRVTPDIAVKARRASGSTHPVPIEIGSTQGRALAIRWLLGASRKRPGRNMAFKLSSELVDATKGRGGAIRKREETHRMAEANRAFAHFR</sequence>
<organism>
    <name type="scientific">Oenothera elata subsp. hookeri</name>
    <name type="common">Hooker's evening primrose</name>
    <name type="synonym">Oenothera hookeri</name>
    <dbReference type="NCBI Taxonomy" id="85636"/>
    <lineage>
        <taxon>Eukaryota</taxon>
        <taxon>Viridiplantae</taxon>
        <taxon>Streptophyta</taxon>
        <taxon>Embryophyta</taxon>
        <taxon>Tracheophyta</taxon>
        <taxon>Spermatophyta</taxon>
        <taxon>Magnoliopsida</taxon>
        <taxon>eudicotyledons</taxon>
        <taxon>Gunneridae</taxon>
        <taxon>Pentapetalae</taxon>
        <taxon>rosids</taxon>
        <taxon>malvids</taxon>
        <taxon>Myrtales</taxon>
        <taxon>Onagraceae</taxon>
        <taxon>Onagroideae</taxon>
        <taxon>Onagreae</taxon>
        <taxon>Oenothera</taxon>
    </lineage>
</organism>
<evidence type="ECO:0000250" key="1"/>
<evidence type="ECO:0000255" key="2">
    <source>
        <dbReference type="HAMAP-Rule" id="MF_00480"/>
    </source>
</evidence>
<evidence type="ECO:0000305" key="3"/>
<accession>Q9ME90</accession>
<accession>A9IKS5</accession>
<gene>
    <name type="primary">rps7-A</name>
</gene>
<gene>
    <name type="primary">rps7-B</name>
</gene>
<dbReference type="EMBL" id="AJ271079">
    <property type="protein sequence ID" value="CAP58408.1"/>
    <property type="molecule type" value="Genomic_DNA"/>
</dbReference>
<dbReference type="EMBL" id="AJ271079">
    <property type="protein sequence ID" value="CAP58411.1"/>
    <property type="molecule type" value="Genomic_DNA"/>
</dbReference>
<dbReference type="SMR" id="Q9ME90"/>
<dbReference type="GO" id="GO:0009507">
    <property type="term" value="C:chloroplast"/>
    <property type="evidence" value="ECO:0007669"/>
    <property type="project" value="UniProtKB-SubCell"/>
</dbReference>
<dbReference type="GO" id="GO:0015935">
    <property type="term" value="C:small ribosomal subunit"/>
    <property type="evidence" value="ECO:0007669"/>
    <property type="project" value="InterPro"/>
</dbReference>
<dbReference type="GO" id="GO:0019843">
    <property type="term" value="F:rRNA binding"/>
    <property type="evidence" value="ECO:0007669"/>
    <property type="project" value="UniProtKB-UniRule"/>
</dbReference>
<dbReference type="GO" id="GO:0003735">
    <property type="term" value="F:structural constituent of ribosome"/>
    <property type="evidence" value="ECO:0007669"/>
    <property type="project" value="InterPro"/>
</dbReference>
<dbReference type="GO" id="GO:0006412">
    <property type="term" value="P:translation"/>
    <property type="evidence" value="ECO:0007669"/>
    <property type="project" value="UniProtKB-UniRule"/>
</dbReference>
<dbReference type="CDD" id="cd14871">
    <property type="entry name" value="uS7_Chloroplast"/>
    <property type="match status" value="1"/>
</dbReference>
<dbReference type="FunFam" id="1.10.455.10:FF:000001">
    <property type="entry name" value="30S ribosomal protein S7"/>
    <property type="match status" value="1"/>
</dbReference>
<dbReference type="Gene3D" id="1.10.455.10">
    <property type="entry name" value="Ribosomal protein S7 domain"/>
    <property type="match status" value="1"/>
</dbReference>
<dbReference type="HAMAP" id="MF_00480_B">
    <property type="entry name" value="Ribosomal_uS7_B"/>
    <property type="match status" value="1"/>
</dbReference>
<dbReference type="InterPro" id="IPR000235">
    <property type="entry name" value="Ribosomal_uS7"/>
</dbReference>
<dbReference type="InterPro" id="IPR005717">
    <property type="entry name" value="Ribosomal_uS7_bac/org-type"/>
</dbReference>
<dbReference type="InterPro" id="IPR020606">
    <property type="entry name" value="Ribosomal_uS7_CS"/>
</dbReference>
<dbReference type="InterPro" id="IPR023798">
    <property type="entry name" value="Ribosomal_uS7_dom"/>
</dbReference>
<dbReference type="InterPro" id="IPR036823">
    <property type="entry name" value="Ribosomal_uS7_dom_sf"/>
</dbReference>
<dbReference type="NCBIfam" id="TIGR01029">
    <property type="entry name" value="rpsG_bact"/>
    <property type="match status" value="1"/>
</dbReference>
<dbReference type="PANTHER" id="PTHR11205">
    <property type="entry name" value="RIBOSOMAL PROTEIN S7"/>
    <property type="match status" value="1"/>
</dbReference>
<dbReference type="Pfam" id="PF00177">
    <property type="entry name" value="Ribosomal_S7"/>
    <property type="match status" value="1"/>
</dbReference>
<dbReference type="PIRSF" id="PIRSF002122">
    <property type="entry name" value="RPS7p_RPS7a_RPS5e_RPS7o"/>
    <property type="match status" value="1"/>
</dbReference>
<dbReference type="SUPFAM" id="SSF47973">
    <property type="entry name" value="Ribosomal protein S7"/>
    <property type="match status" value="1"/>
</dbReference>
<dbReference type="PROSITE" id="PS00052">
    <property type="entry name" value="RIBOSOMAL_S7"/>
    <property type="match status" value="1"/>
</dbReference>
<keyword id="KW-0150">Chloroplast</keyword>
<keyword id="KW-0934">Plastid</keyword>
<keyword id="KW-0687">Ribonucleoprotein</keyword>
<keyword id="KW-0689">Ribosomal protein</keyword>
<keyword id="KW-0694">RNA-binding</keyword>
<keyword id="KW-0699">rRNA-binding</keyword>
<feature type="chain" id="PRO_0000124482" description="Small ribosomal subunit protein uS7cz/uS7cy">
    <location>
        <begin position="1"/>
        <end position="155"/>
    </location>
</feature>
<proteinExistence type="inferred from homology"/>
<comment type="function">
    <text evidence="1">One of the primary rRNA binding proteins, it binds directly to 16S rRNA where it nucleates assembly of the head domain of the 30S subunit.</text>
</comment>
<comment type="subunit">
    <text>Part of the 30S ribosomal subunit.</text>
</comment>
<comment type="subcellular location">
    <subcellularLocation>
        <location>Plastid</location>
        <location>Chloroplast</location>
    </subcellularLocation>
</comment>
<comment type="similarity">
    <text evidence="3">Belongs to the universal ribosomal protein uS7 family.</text>
</comment>